<gene>
    <name evidence="1" type="primary">E1</name>
</gene>
<organismHost>
    <name type="scientific">Homo sapiens</name>
    <name type="common">Human</name>
    <dbReference type="NCBI Taxonomy" id="9606"/>
</organismHost>
<proteinExistence type="inferred from homology"/>
<feature type="chain" id="PRO_0000133147" description="Replication protein E1">
    <location>
        <begin position="1"/>
        <end position="647"/>
    </location>
</feature>
<feature type="domain" description="SF3 helicase" evidence="1">
    <location>
        <begin position="447"/>
        <end position="597"/>
    </location>
</feature>
<feature type="region of interest" description="Disordered" evidence="2">
    <location>
        <begin position="88"/>
        <end position="107"/>
    </location>
</feature>
<feature type="region of interest" description="Disordered" evidence="2">
    <location>
        <begin position="146"/>
        <end position="178"/>
    </location>
</feature>
<feature type="region of interest" description="DNA-binding region" evidence="1">
    <location>
        <begin position="182"/>
        <end position="348"/>
    </location>
</feature>
<feature type="short sequence motif" description="Nuclear localization signal" evidence="1">
    <location>
        <begin position="86"/>
        <end position="88"/>
    </location>
</feature>
<feature type="compositionally biased region" description="Low complexity" evidence="2">
    <location>
        <begin position="149"/>
        <end position="169"/>
    </location>
</feature>
<feature type="binding site" evidence="1">
    <location>
        <begin position="473"/>
        <end position="480"/>
    </location>
    <ligand>
        <name>ATP</name>
        <dbReference type="ChEBI" id="CHEBI:30616"/>
    </ligand>
</feature>
<feature type="modified residue" description="Phosphoserine; by host" evidence="1">
    <location>
        <position position="92"/>
    </location>
</feature>
<feature type="modified residue" description="Phosphoserine; by host" evidence="1">
    <location>
        <position position="106"/>
    </location>
</feature>
<feature type="cross-link" description="Glycyl lysine isopeptide (Lys-Gly) (interchain with G-Cter in SUMO)" evidence="1">
    <location>
        <position position="554"/>
    </location>
</feature>
<name>VE1_HPV52</name>
<reference key="1">
    <citation type="journal article" date="1994" name="Curr. Top. Microbiol. Immunol.">
        <title>Primer-directed sequencing of human papillomavirus types.</title>
        <authorList>
            <person name="Delius H."/>
            <person name="Hofmann B."/>
        </authorList>
    </citation>
    <scope>NUCLEOTIDE SEQUENCE [GENOMIC DNA]</scope>
</reference>
<evidence type="ECO:0000255" key="1">
    <source>
        <dbReference type="HAMAP-Rule" id="MF_04000"/>
    </source>
</evidence>
<evidence type="ECO:0000256" key="2">
    <source>
        <dbReference type="SAM" id="MobiDB-lite"/>
    </source>
</evidence>
<comment type="function">
    <text evidence="1">ATP-dependent DNA 3'-5' helicase required for initiation of viral DNA replication. It forms a complex with the viral E2 protein. The E1-E2 complex binds to the replication origin which contains binding sites for both proteins. During the initial step, a dimer of E1 interacts with a dimer of protein E2 leading to a complex that binds the viral origin of replication with high specificity. Then, a second dimer of E1 displaces the E2 dimer in an ATP-dependent manner to form the E1 tetramer. Following this, two E1 monomers are added to each half of the site, which results in the formation of two E1 trimers on the viral ori. Subsequently, two hexamers will be created. The double hexamer acts as a bi-directional helicase machinery and unwinds the viral DNA and then recruits the host DNA polymerase to start replication.</text>
</comment>
<comment type="catalytic activity">
    <reaction evidence="1">
        <text>Couples ATP hydrolysis with the unwinding of duplex DNA by translocating in the 3'-5' direction.</text>
        <dbReference type="EC" id="5.6.2.4"/>
    </reaction>
</comment>
<comment type="catalytic activity">
    <reaction evidence="1">
        <text>ATP + H2O = ADP + phosphate + H(+)</text>
        <dbReference type="Rhea" id="RHEA:13065"/>
        <dbReference type="ChEBI" id="CHEBI:15377"/>
        <dbReference type="ChEBI" id="CHEBI:15378"/>
        <dbReference type="ChEBI" id="CHEBI:30616"/>
        <dbReference type="ChEBI" id="CHEBI:43474"/>
        <dbReference type="ChEBI" id="CHEBI:456216"/>
        <dbReference type="EC" id="5.6.2.4"/>
    </reaction>
</comment>
<comment type="subunit">
    <text evidence="1">Can form hexamers. Interacts with E2 protein; this interaction increases E1 DNA binding specificity. Interacts with host DNA polymerase subunit POLA2. Interacts with host single stranded DNA-binding protein RPA1. Interacts with host TOP1; this interaction stimulates the enzymatic activity of TOP1.</text>
</comment>
<comment type="subcellular location">
    <subcellularLocation>
        <location evidence="1">Host nucleus</location>
    </subcellularLocation>
</comment>
<comment type="PTM">
    <text evidence="1">Phosphorylated.</text>
</comment>
<comment type="PTM">
    <text evidence="1">Sumoylated.</text>
</comment>
<comment type="similarity">
    <text evidence="1">Belongs to the papillomaviridae E1 protein family.</text>
</comment>
<accession>P36730</accession>
<dbReference type="EC" id="5.6.2.4" evidence="1"/>
<dbReference type="EMBL" id="X74481">
    <property type="protein sequence ID" value="CAA52587.1"/>
    <property type="molecule type" value="Genomic_DNA"/>
</dbReference>
<dbReference type="PIR" id="S36575">
    <property type="entry name" value="S36575"/>
</dbReference>
<dbReference type="SMR" id="P36730"/>
<dbReference type="Proteomes" id="UP000008692">
    <property type="component" value="Genome"/>
</dbReference>
<dbReference type="GO" id="GO:0042025">
    <property type="term" value="C:host cell nucleus"/>
    <property type="evidence" value="ECO:0007669"/>
    <property type="project" value="UniProtKB-SubCell"/>
</dbReference>
<dbReference type="GO" id="GO:0005524">
    <property type="term" value="F:ATP binding"/>
    <property type="evidence" value="ECO:0007669"/>
    <property type="project" value="UniProtKB-UniRule"/>
</dbReference>
<dbReference type="GO" id="GO:0016887">
    <property type="term" value="F:ATP hydrolysis activity"/>
    <property type="evidence" value="ECO:0007669"/>
    <property type="project" value="RHEA"/>
</dbReference>
<dbReference type="GO" id="GO:0003677">
    <property type="term" value="F:DNA binding"/>
    <property type="evidence" value="ECO:0007669"/>
    <property type="project" value="UniProtKB-UniRule"/>
</dbReference>
<dbReference type="GO" id="GO:0003678">
    <property type="term" value="F:DNA helicase activity"/>
    <property type="evidence" value="ECO:0007669"/>
    <property type="project" value="UniProtKB-UniRule"/>
</dbReference>
<dbReference type="GO" id="GO:0006260">
    <property type="term" value="P:DNA replication"/>
    <property type="evidence" value="ECO:0007669"/>
    <property type="project" value="UniProtKB-UniRule"/>
</dbReference>
<dbReference type="Gene3D" id="3.40.1310.10">
    <property type="match status" value="1"/>
</dbReference>
<dbReference type="Gene3D" id="3.40.50.300">
    <property type="entry name" value="P-loop containing nucleotide triphosphate hydrolases"/>
    <property type="match status" value="1"/>
</dbReference>
<dbReference type="Gene3D" id="1.10.10.510">
    <property type="entry name" value="Zinc finger, large T-antigen D1 domain"/>
    <property type="match status" value="1"/>
</dbReference>
<dbReference type="HAMAP" id="MF_04000">
    <property type="entry name" value="PPV_E1"/>
    <property type="match status" value="1"/>
</dbReference>
<dbReference type="InterPro" id="IPR014015">
    <property type="entry name" value="Helicase_SF3_DNA-vir"/>
</dbReference>
<dbReference type="InterPro" id="IPR027417">
    <property type="entry name" value="P-loop_NTPase"/>
</dbReference>
<dbReference type="InterPro" id="IPR001177">
    <property type="entry name" value="PPV_DNA_helicase_E1_C"/>
</dbReference>
<dbReference type="InterPro" id="IPR014000">
    <property type="entry name" value="PPV_DNA_helicase_E1_N"/>
</dbReference>
<dbReference type="InterPro" id="IPR046832">
    <property type="entry name" value="PPV_E1_DBD"/>
</dbReference>
<dbReference type="InterPro" id="IPR046935">
    <property type="entry name" value="PPV_E1_DBD_sf"/>
</dbReference>
<dbReference type="InterPro" id="IPR016393">
    <property type="entry name" value="Rep_E1_papillomaV"/>
</dbReference>
<dbReference type="InterPro" id="IPR037102">
    <property type="entry name" value="Znf_lg_T-Ag_D1_dom_sf"/>
</dbReference>
<dbReference type="Pfam" id="PF00519">
    <property type="entry name" value="PPV_E1_C"/>
    <property type="match status" value="1"/>
</dbReference>
<dbReference type="Pfam" id="PF20450">
    <property type="entry name" value="PPV_E1_DBD"/>
    <property type="match status" value="1"/>
</dbReference>
<dbReference type="Pfam" id="PF00524">
    <property type="entry name" value="PPV_E1_N"/>
    <property type="match status" value="1"/>
</dbReference>
<dbReference type="PIRSF" id="PIRSF003383">
    <property type="entry name" value="Rep_E1_papillomaV"/>
    <property type="match status" value="1"/>
</dbReference>
<dbReference type="SUPFAM" id="SSF55464">
    <property type="entry name" value="Origin of replication-binding domain, RBD-like"/>
    <property type="match status" value="1"/>
</dbReference>
<dbReference type="SUPFAM" id="SSF52540">
    <property type="entry name" value="P-loop containing nucleoside triphosphate hydrolases"/>
    <property type="match status" value="1"/>
</dbReference>
<dbReference type="PROSITE" id="PS51206">
    <property type="entry name" value="SF3_HELICASE_1"/>
    <property type="match status" value="1"/>
</dbReference>
<protein>
    <recommendedName>
        <fullName evidence="1">Replication protein E1</fullName>
        <ecNumber evidence="1">5.6.2.4</ecNumber>
    </recommendedName>
    <alternativeName>
        <fullName evidence="1">ATP-dependent helicase E1</fullName>
    </alternativeName>
    <alternativeName>
        <fullName evidence="1">DNA 3'-5' helicase E1</fullName>
    </alternativeName>
</protein>
<organism>
    <name type="scientific">Human papillomavirus 52</name>
    <dbReference type="NCBI Taxonomy" id="10618"/>
    <lineage>
        <taxon>Viruses</taxon>
        <taxon>Monodnaviria</taxon>
        <taxon>Shotokuvirae</taxon>
        <taxon>Cossaviricota</taxon>
        <taxon>Papovaviricetes</taxon>
        <taxon>Zurhausenvirales</taxon>
        <taxon>Papillomaviridae</taxon>
        <taxon>Firstpapillomavirinae</taxon>
        <taxon>Alphapapillomavirus</taxon>
        <taxon>Alphapapillomavirus 9</taxon>
    </lineage>
</organism>
<sequence length="647" mass="73156">MEDPEGTEGEREGCTGWFEVEAIIEKQTGDNISEDEDENAYDSGTDLIDFIDDSNINNEQAEHEAARALFNAQEGEDDLHAVSAVKRKFTSSPESAGQDGVEKHGSPRAKHICVNTECVLPKRKPCHVEDSGYGNSEVEAQQMADQVDGQNGDWQSNSSQSSGVGASNSDVSCTSIEDNEENSNRTLKSIQNIMCENSIKTTVLFKFKETYGVSFMELVRPFKSNRSSCTDWCIIGMGVTPSVAEGLKVLIQPYSIYAHLQCLTCDRGVLILLLIRFKCGKNRLTVSKLMSQLLNIPETHMVIEPPKLRSATCALYWYRTGLSNISEVYGTTPEWIEQQTVLQHSFDNSIFDFGEMVQWAYDHDITDDSDIAYKYAQLADVNSNAAAFLKSNSQAKIVKDCATMCRHYKRAERKHMNIGQWIQYRCDRIDDGGDWRPIVRFLRYQDIEFTAFLDAFKKFLKGIPKKNCLVLYGPANTGKSYFGMSLIRFLSGCVISYVNSKSHFWLQPLTDAKVGMIDDVTPICWTYIDDYMRNALDGNDISVDVKHRALVQIKCPPLILTTNTNAGTDPRWPYLHSRLVVFHFKNPFPFDENGNPIYEINNENWKSFFSRTWCKLDLIQEEDKENDGVDTGTFKCSAGKNTRSIRS</sequence>
<keyword id="KW-0067">ATP-binding</keyword>
<keyword id="KW-0235">DNA replication</keyword>
<keyword id="KW-0238">DNA-binding</keyword>
<keyword id="KW-0244">Early protein</keyword>
<keyword id="KW-0347">Helicase</keyword>
<keyword id="KW-1048">Host nucleus</keyword>
<keyword id="KW-0378">Hydrolase</keyword>
<keyword id="KW-0413">Isomerase</keyword>
<keyword id="KW-1017">Isopeptide bond</keyword>
<keyword id="KW-0547">Nucleotide-binding</keyword>
<keyword id="KW-0597">Phosphoprotein</keyword>
<keyword id="KW-0832">Ubl conjugation</keyword>